<proteinExistence type="evidence at transcript level"/>
<evidence type="ECO:0000255" key="1"/>
<evidence type="ECO:0000255" key="2">
    <source>
        <dbReference type="PROSITE-ProRule" id="PRU00521"/>
    </source>
</evidence>
<evidence type="ECO:0000256" key="3">
    <source>
        <dbReference type="SAM" id="MobiDB-lite"/>
    </source>
</evidence>
<organism>
    <name type="scientific">Mus musculus</name>
    <name type="common">Mouse</name>
    <dbReference type="NCBI Taxonomy" id="10090"/>
    <lineage>
        <taxon>Eukaryota</taxon>
        <taxon>Metazoa</taxon>
        <taxon>Chordata</taxon>
        <taxon>Craniata</taxon>
        <taxon>Vertebrata</taxon>
        <taxon>Euteleostomi</taxon>
        <taxon>Mammalia</taxon>
        <taxon>Eutheria</taxon>
        <taxon>Euarchontoglires</taxon>
        <taxon>Glires</taxon>
        <taxon>Rodentia</taxon>
        <taxon>Myomorpha</taxon>
        <taxon>Muroidea</taxon>
        <taxon>Muridae</taxon>
        <taxon>Murinae</taxon>
        <taxon>Mus</taxon>
        <taxon>Mus</taxon>
    </lineage>
</organism>
<gene>
    <name type="primary">Tacr2</name>
    <name type="synonym">Tac2r</name>
</gene>
<protein>
    <recommendedName>
        <fullName>Substance-K receptor</fullName>
        <shortName>SKR</shortName>
    </recommendedName>
    <alternativeName>
        <fullName>NK-2 receptor</fullName>
        <shortName>NK-2R</shortName>
    </alternativeName>
    <alternativeName>
        <fullName>Neurokinin A receptor</fullName>
    </alternativeName>
    <alternativeName>
        <fullName>Tachykinin receptor 2</fullName>
    </alternativeName>
</protein>
<sequence length="384" mass="43114">MGAHASVTDTNILSGLESNATGVTAFSMPGWQLALWATAYLALVLVAVTGNATVIWIILAHERMRTVTNYFIINLALADLCMAAFNATFNFIYASHNIWYFGSTFCYFQNLFPVTAMFVSIYSMTAIAADRYMAIVHPFQPRLSAPSTKAVIAVIWLVALALASPQCFYSTITVDQGATKCVVAWPNDNGGKMLLLYHLVVFVLIYFLPLVVMFAAYSVIGLTLWKRAVPRHQAHGANLRHLQAKKKFVKAMVLVVVTFAICWLPYHLYFILGTFQEDIYYRKFIQQVYLALFWLAMSSTMYNPIIYCCLNHRFRSGFRLAFRCCPWGTPTEEDRLELTHTPSISRRVNRCHTKETLFMTGDMTHSEATNGQVGGPQDGEPAGP</sequence>
<dbReference type="EMBL" id="X62933">
    <property type="protein sequence ID" value="CAA44706.1"/>
    <property type="molecule type" value="mRNA"/>
</dbReference>
<dbReference type="CCDS" id="CCDS35919.1"/>
<dbReference type="PIR" id="S20303">
    <property type="entry name" value="S20303"/>
</dbReference>
<dbReference type="RefSeq" id="NP_033340.3">
    <property type="nucleotide sequence ID" value="NM_009314.4"/>
</dbReference>
<dbReference type="SMR" id="P30549"/>
<dbReference type="FunCoup" id="P30549">
    <property type="interactions" value="588"/>
</dbReference>
<dbReference type="STRING" id="10090.ENSMUSP00000020278"/>
<dbReference type="BindingDB" id="P30549"/>
<dbReference type="ChEMBL" id="CHEMBL2813"/>
<dbReference type="GlyCosmos" id="P30549">
    <property type="glycosylation" value="1 site, No reported glycans"/>
</dbReference>
<dbReference type="GlyGen" id="P30549">
    <property type="glycosylation" value="1 site"/>
</dbReference>
<dbReference type="iPTMnet" id="P30549"/>
<dbReference type="PhosphoSitePlus" id="P30549"/>
<dbReference type="PaxDb" id="10090-ENSMUSP00000020278"/>
<dbReference type="ProteomicsDB" id="293852"/>
<dbReference type="Antibodypedia" id="1518">
    <property type="antibodies" value="300 antibodies from 35 providers"/>
</dbReference>
<dbReference type="DNASU" id="21337"/>
<dbReference type="Ensembl" id="ENSMUST00000020278.6">
    <property type="protein sequence ID" value="ENSMUSP00000020278.6"/>
    <property type="gene ID" value="ENSMUSG00000020081.6"/>
</dbReference>
<dbReference type="GeneID" id="21337"/>
<dbReference type="KEGG" id="mmu:21337"/>
<dbReference type="UCSC" id="uc007fgx.2">
    <property type="organism name" value="mouse"/>
</dbReference>
<dbReference type="AGR" id="MGI:98477"/>
<dbReference type="CTD" id="6865"/>
<dbReference type="MGI" id="MGI:98477">
    <property type="gene designation" value="Tacr2"/>
</dbReference>
<dbReference type="VEuPathDB" id="HostDB:ENSMUSG00000020081"/>
<dbReference type="eggNOG" id="KOG4219">
    <property type="taxonomic scope" value="Eukaryota"/>
</dbReference>
<dbReference type="GeneTree" id="ENSGT00940000155512"/>
<dbReference type="HOGENOM" id="CLU_009579_6_1_1"/>
<dbReference type="InParanoid" id="P30549"/>
<dbReference type="OMA" id="RRVNRCH"/>
<dbReference type="OrthoDB" id="5981855at2759"/>
<dbReference type="PhylomeDB" id="P30549"/>
<dbReference type="TreeFam" id="TF315303"/>
<dbReference type="Reactome" id="R-MMU-380095">
    <property type="pathway name" value="Tachykinin receptors bind tachykinins"/>
</dbReference>
<dbReference type="Reactome" id="R-MMU-416476">
    <property type="pathway name" value="G alpha (q) signalling events"/>
</dbReference>
<dbReference type="BioGRID-ORCS" id="21337">
    <property type="hits" value="0 hits in 76 CRISPR screens"/>
</dbReference>
<dbReference type="PRO" id="PR:P30549"/>
<dbReference type="Proteomes" id="UP000000589">
    <property type="component" value="Chromosome 10"/>
</dbReference>
<dbReference type="RNAct" id="P30549">
    <property type="molecule type" value="protein"/>
</dbReference>
<dbReference type="Bgee" id="ENSMUSG00000020081">
    <property type="expression patterns" value="Expressed in kidney vasculature and 24 other cell types or tissues"/>
</dbReference>
<dbReference type="ExpressionAtlas" id="P30549">
    <property type="expression patterns" value="baseline and differential"/>
</dbReference>
<dbReference type="GO" id="GO:0005886">
    <property type="term" value="C:plasma membrane"/>
    <property type="evidence" value="ECO:0007669"/>
    <property type="project" value="UniProtKB-SubCell"/>
</dbReference>
<dbReference type="GO" id="GO:0061827">
    <property type="term" value="C:sperm head"/>
    <property type="evidence" value="ECO:0007669"/>
    <property type="project" value="Ensembl"/>
</dbReference>
<dbReference type="GO" id="GO:0097225">
    <property type="term" value="C:sperm midpiece"/>
    <property type="evidence" value="ECO:0007669"/>
    <property type="project" value="Ensembl"/>
</dbReference>
<dbReference type="GO" id="GO:0016497">
    <property type="term" value="F:substance K receptor activity"/>
    <property type="evidence" value="ECO:0007669"/>
    <property type="project" value="Ensembl"/>
</dbReference>
<dbReference type="GO" id="GO:0014827">
    <property type="term" value="P:intestine smooth muscle contraction"/>
    <property type="evidence" value="ECO:0007669"/>
    <property type="project" value="Ensembl"/>
</dbReference>
<dbReference type="GO" id="GO:0033685">
    <property type="term" value="P:negative regulation of luteinizing hormone secretion"/>
    <property type="evidence" value="ECO:0007669"/>
    <property type="project" value="Ensembl"/>
</dbReference>
<dbReference type="GO" id="GO:0035106">
    <property type="term" value="P:operant conditioning"/>
    <property type="evidence" value="ECO:0007669"/>
    <property type="project" value="Ensembl"/>
</dbReference>
<dbReference type="GO" id="GO:0014057">
    <property type="term" value="P:positive regulation of acetylcholine secretion, neurotransmission"/>
    <property type="evidence" value="ECO:0007669"/>
    <property type="project" value="Ensembl"/>
</dbReference>
<dbReference type="GO" id="GO:1902093">
    <property type="term" value="P:positive regulation of flagellated sperm motility"/>
    <property type="evidence" value="ECO:0007669"/>
    <property type="project" value="Ensembl"/>
</dbReference>
<dbReference type="GO" id="GO:0043270">
    <property type="term" value="P:positive regulation of monoatomic ion transport"/>
    <property type="evidence" value="ECO:0007669"/>
    <property type="project" value="Ensembl"/>
</dbReference>
<dbReference type="GO" id="GO:0070474">
    <property type="term" value="P:positive regulation of uterine smooth muscle contraction"/>
    <property type="evidence" value="ECO:0007669"/>
    <property type="project" value="Ensembl"/>
</dbReference>
<dbReference type="GO" id="GO:0043117">
    <property type="term" value="P:positive regulation of vascular permeability"/>
    <property type="evidence" value="ECO:0007669"/>
    <property type="project" value="Ensembl"/>
</dbReference>
<dbReference type="GO" id="GO:0070459">
    <property type="term" value="P:prolactin secretion"/>
    <property type="evidence" value="ECO:0007669"/>
    <property type="project" value="Ensembl"/>
</dbReference>
<dbReference type="GO" id="GO:0070472">
    <property type="term" value="P:regulation of uterine smooth muscle contraction"/>
    <property type="evidence" value="ECO:0000314"/>
    <property type="project" value="CACAO"/>
</dbReference>
<dbReference type="GO" id="GO:0051602">
    <property type="term" value="P:response to electrical stimulus"/>
    <property type="evidence" value="ECO:0007669"/>
    <property type="project" value="Ensembl"/>
</dbReference>
<dbReference type="CDD" id="cd16004">
    <property type="entry name" value="7tmA_SKR_NK2R"/>
    <property type="match status" value="1"/>
</dbReference>
<dbReference type="FunFam" id="1.20.1070.10:FF:000224">
    <property type="entry name" value="Tachykinin receptor 2"/>
    <property type="match status" value="1"/>
</dbReference>
<dbReference type="Gene3D" id="1.20.1070.10">
    <property type="entry name" value="Rhodopsin 7-helix transmembrane proteins"/>
    <property type="match status" value="1"/>
</dbReference>
<dbReference type="InterPro" id="IPR000276">
    <property type="entry name" value="GPCR_Rhodpsn"/>
</dbReference>
<dbReference type="InterPro" id="IPR017452">
    <property type="entry name" value="GPCR_Rhodpsn_7TM"/>
</dbReference>
<dbReference type="InterPro" id="IPR001681">
    <property type="entry name" value="Neurokn_rcpt"/>
</dbReference>
<dbReference type="InterPro" id="IPR000913">
    <property type="entry name" value="NK2_rcpt"/>
</dbReference>
<dbReference type="PANTHER" id="PTHR46925">
    <property type="entry name" value="G-PROTEIN COUPLED RECEPTOR TKR-1-RELATED"/>
    <property type="match status" value="1"/>
</dbReference>
<dbReference type="PANTHER" id="PTHR46925:SF3">
    <property type="entry name" value="SUBSTANCE-K RECEPTOR"/>
    <property type="match status" value="1"/>
</dbReference>
<dbReference type="Pfam" id="PF00001">
    <property type="entry name" value="7tm_1"/>
    <property type="match status" value="1"/>
</dbReference>
<dbReference type="PRINTS" id="PR00237">
    <property type="entry name" value="GPCRRHODOPSN"/>
</dbReference>
<dbReference type="PRINTS" id="PR01025">
    <property type="entry name" value="NEUROKININ2R"/>
</dbReference>
<dbReference type="PRINTS" id="PR00244">
    <property type="entry name" value="NEUROKININR"/>
</dbReference>
<dbReference type="SUPFAM" id="SSF81321">
    <property type="entry name" value="Family A G protein-coupled receptor-like"/>
    <property type="match status" value="1"/>
</dbReference>
<dbReference type="PROSITE" id="PS00237">
    <property type="entry name" value="G_PROTEIN_RECEP_F1_1"/>
    <property type="match status" value="1"/>
</dbReference>
<dbReference type="PROSITE" id="PS50262">
    <property type="entry name" value="G_PROTEIN_RECEP_F1_2"/>
    <property type="match status" value="1"/>
</dbReference>
<accession>P30549</accession>
<reference key="1">
    <citation type="journal article" date="1992" name="Eur. J. Biochem.">
        <title>Molecular cloning of the murine substance K and substance P receptor genes.</title>
        <authorList>
            <person name="Sundelin J.B."/>
            <person name="Provvedini D.M."/>
            <person name="Wahlestedt C.R."/>
            <person name="Laurell H."/>
            <person name="Pohl J.S."/>
            <person name="Peterson P.A."/>
        </authorList>
    </citation>
    <scope>NUCLEOTIDE SEQUENCE [MRNA]</scope>
    <source>
        <tissue>Intestine</tissue>
    </source>
</reference>
<keyword id="KW-1003">Cell membrane</keyword>
<keyword id="KW-1015">Disulfide bond</keyword>
<keyword id="KW-0297">G-protein coupled receptor</keyword>
<keyword id="KW-0325">Glycoprotein</keyword>
<keyword id="KW-0449">Lipoprotein</keyword>
<keyword id="KW-0472">Membrane</keyword>
<keyword id="KW-0564">Palmitate</keyword>
<keyword id="KW-0675">Receptor</keyword>
<keyword id="KW-1185">Reference proteome</keyword>
<keyword id="KW-0807">Transducer</keyword>
<keyword id="KW-0812">Transmembrane</keyword>
<keyword id="KW-1133">Transmembrane helix</keyword>
<name>NK2R_MOUSE</name>
<feature type="chain" id="PRO_0000069895" description="Substance-K receptor">
    <location>
        <begin position="1"/>
        <end position="384"/>
    </location>
</feature>
<feature type="topological domain" description="Extracellular" evidence="1">
    <location>
        <begin position="1"/>
        <end position="32"/>
    </location>
</feature>
<feature type="transmembrane region" description="Helical; Name=1" evidence="1">
    <location>
        <begin position="33"/>
        <end position="56"/>
    </location>
</feature>
<feature type="topological domain" description="Cytoplasmic" evidence="1">
    <location>
        <begin position="57"/>
        <end position="69"/>
    </location>
</feature>
<feature type="transmembrane region" description="Helical; Name=2" evidence="1">
    <location>
        <begin position="70"/>
        <end position="90"/>
    </location>
</feature>
<feature type="topological domain" description="Extracellular" evidence="1">
    <location>
        <begin position="91"/>
        <end position="107"/>
    </location>
</feature>
<feature type="transmembrane region" description="Helical; Name=3" evidence="1">
    <location>
        <begin position="108"/>
        <end position="129"/>
    </location>
</feature>
<feature type="topological domain" description="Cytoplasmic" evidence="1">
    <location>
        <begin position="130"/>
        <end position="149"/>
    </location>
</feature>
<feature type="transmembrane region" description="Helical; Name=4" evidence="1">
    <location>
        <begin position="150"/>
        <end position="170"/>
    </location>
</feature>
<feature type="topological domain" description="Extracellular" evidence="1">
    <location>
        <begin position="171"/>
        <end position="196"/>
    </location>
</feature>
<feature type="transmembrane region" description="Helical; Name=5" evidence="1">
    <location>
        <begin position="197"/>
        <end position="218"/>
    </location>
</feature>
<feature type="topological domain" description="Cytoplasmic" evidence="1">
    <location>
        <begin position="219"/>
        <end position="251"/>
    </location>
</feature>
<feature type="transmembrane region" description="Helical; Name=6" evidence="1">
    <location>
        <begin position="252"/>
        <end position="272"/>
    </location>
</feature>
<feature type="topological domain" description="Extracellular" evidence="1">
    <location>
        <begin position="273"/>
        <end position="290"/>
    </location>
</feature>
<feature type="transmembrane region" description="Helical; Name=7" evidence="1">
    <location>
        <begin position="291"/>
        <end position="310"/>
    </location>
</feature>
<feature type="topological domain" description="Cytoplasmic" evidence="1">
    <location>
        <begin position="311"/>
        <end position="384"/>
    </location>
</feature>
<feature type="region of interest" description="Disordered" evidence="3">
    <location>
        <begin position="365"/>
        <end position="384"/>
    </location>
</feature>
<feature type="lipid moiety-binding region" description="S-palmitoyl cysteine" evidence="1">
    <location>
        <position position="324"/>
    </location>
</feature>
<feature type="glycosylation site" description="N-linked (GlcNAc...) asparagine" evidence="1">
    <location>
        <position position="19"/>
    </location>
</feature>
<feature type="disulfide bond" evidence="2">
    <location>
        <begin position="106"/>
        <end position="181"/>
    </location>
</feature>
<comment type="function">
    <text>This is a receptor for the tachykinin neuropeptide substance K (neurokinin A). It is associated with G proteins that activate a phosphatidylinositol-calcium second messenger system. The rank order of affinity of this receptor to tachykinins is: substance K &gt; neuromedin-K &gt; substance P.</text>
</comment>
<comment type="subcellular location">
    <subcellularLocation>
        <location>Cell membrane</location>
        <topology>Multi-pass membrane protein</topology>
    </subcellularLocation>
</comment>
<comment type="similarity">
    <text evidence="2">Belongs to the G-protein coupled receptor 1 family.</text>
</comment>